<reference key="1">
    <citation type="journal article" date="2004" name="Proc. Natl. Acad. Sci. U.S.A.">
        <title>Complete genomes of two clinical Staphylococcus aureus strains: evidence for the rapid evolution of virulence and drug resistance.</title>
        <authorList>
            <person name="Holden M.T.G."/>
            <person name="Feil E.J."/>
            <person name="Lindsay J.A."/>
            <person name="Peacock S.J."/>
            <person name="Day N.P.J."/>
            <person name="Enright M.C."/>
            <person name="Foster T.J."/>
            <person name="Moore C.E."/>
            <person name="Hurst L."/>
            <person name="Atkin R."/>
            <person name="Barron A."/>
            <person name="Bason N."/>
            <person name="Bentley S.D."/>
            <person name="Chillingworth C."/>
            <person name="Chillingworth T."/>
            <person name="Churcher C."/>
            <person name="Clark L."/>
            <person name="Corton C."/>
            <person name="Cronin A."/>
            <person name="Doggett J."/>
            <person name="Dowd L."/>
            <person name="Feltwell T."/>
            <person name="Hance Z."/>
            <person name="Harris B."/>
            <person name="Hauser H."/>
            <person name="Holroyd S."/>
            <person name="Jagels K."/>
            <person name="James K.D."/>
            <person name="Lennard N."/>
            <person name="Line A."/>
            <person name="Mayes R."/>
            <person name="Moule S."/>
            <person name="Mungall K."/>
            <person name="Ormond D."/>
            <person name="Quail M.A."/>
            <person name="Rabbinowitsch E."/>
            <person name="Rutherford K.M."/>
            <person name="Sanders M."/>
            <person name="Sharp S."/>
            <person name="Simmonds M."/>
            <person name="Stevens K."/>
            <person name="Whitehead S."/>
            <person name="Barrell B.G."/>
            <person name="Spratt B.G."/>
            <person name="Parkhill J."/>
        </authorList>
    </citation>
    <scope>NUCLEOTIDE SEQUENCE [LARGE SCALE GENOMIC DNA]</scope>
    <source>
        <strain>MRSA252</strain>
    </source>
</reference>
<organism>
    <name type="scientific">Staphylococcus aureus (strain MRSA252)</name>
    <dbReference type="NCBI Taxonomy" id="282458"/>
    <lineage>
        <taxon>Bacteria</taxon>
        <taxon>Bacillati</taxon>
        <taxon>Bacillota</taxon>
        <taxon>Bacilli</taxon>
        <taxon>Bacillales</taxon>
        <taxon>Staphylococcaceae</taxon>
        <taxon>Staphylococcus</taxon>
    </lineage>
</organism>
<accession>Q6GG09</accession>
<feature type="chain" id="PRO_0000294130" description="Pyruvate kinase">
    <location>
        <begin position="1"/>
        <end position="585"/>
    </location>
</feature>
<feature type="binding site" evidence="1">
    <location>
        <position position="32"/>
    </location>
    <ligand>
        <name>substrate</name>
    </ligand>
</feature>
<feature type="binding site" evidence="2">
    <location>
        <begin position="34"/>
        <end position="37"/>
    </location>
    <ligand>
        <name>ATP</name>
        <dbReference type="ChEBI" id="CHEBI:30616"/>
    </ligand>
</feature>
<feature type="binding site" evidence="1">
    <location>
        <position position="34"/>
    </location>
    <ligand>
        <name>K(+)</name>
        <dbReference type="ChEBI" id="CHEBI:29103"/>
    </ligand>
</feature>
<feature type="binding site" evidence="1">
    <location>
        <position position="36"/>
    </location>
    <ligand>
        <name>K(+)</name>
        <dbReference type="ChEBI" id="CHEBI:29103"/>
    </ligand>
</feature>
<feature type="binding site" evidence="1">
    <location>
        <position position="66"/>
    </location>
    <ligand>
        <name>K(+)</name>
        <dbReference type="ChEBI" id="CHEBI:29103"/>
    </ligand>
</feature>
<feature type="binding site" evidence="1">
    <location>
        <position position="67"/>
    </location>
    <ligand>
        <name>K(+)</name>
        <dbReference type="ChEBI" id="CHEBI:29103"/>
    </ligand>
</feature>
<feature type="binding site" evidence="2">
    <location>
        <position position="73"/>
    </location>
    <ligand>
        <name>ATP</name>
        <dbReference type="ChEBI" id="CHEBI:30616"/>
    </ligand>
</feature>
<feature type="binding site" evidence="2">
    <location>
        <position position="156"/>
    </location>
    <ligand>
        <name>ATP</name>
        <dbReference type="ChEBI" id="CHEBI:30616"/>
    </ligand>
</feature>
<feature type="binding site" evidence="1">
    <location>
        <position position="221"/>
    </location>
    <ligand>
        <name>Mg(2+)</name>
        <dbReference type="ChEBI" id="CHEBI:18420"/>
    </ligand>
</feature>
<feature type="binding site" evidence="1">
    <location>
        <position position="244"/>
    </location>
    <ligand>
        <name>substrate</name>
    </ligand>
</feature>
<feature type="binding site" evidence="1">
    <location>
        <position position="245"/>
    </location>
    <ligand>
        <name>Mg(2+)</name>
        <dbReference type="ChEBI" id="CHEBI:18420"/>
    </ligand>
</feature>
<feature type="binding site" evidence="1">
    <location>
        <position position="245"/>
    </location>
    <ligand>
        <name>substrate</name>
    </ligand>
</feature>
<feature type="binding site" evidence="1">
    <location>
        <position position="277"/>
    </location>
    <ligand>
        <name>substrate</name>
    </ligand>
</feature>
<feature type="site" description="Transition state stabilizer" evidence="1">
    <location>
        <position position="219"/>
    </location>
</feature>
<feature type="strand" evidence="4">
    <location>
        <begin position="4"/>
        <end position="9"/>
    </location>
</feature>
<feature type="helix" evidence="4">
    <location>
        <begin position="12"/>
        <end position="14"/>
    </location>
</feature>
<feature type="helix" evidence="4">
    <location>
        <begin position="17"/>
        <end position="25"/>
    </location>
</feature>
<feature type="strand" evidence="4">
    <location>
        <begin position="28"/>
        <end position="34"/>
    </location>
</feature>
<feature type="helix" evidence="4">
    <location>
        <begin position="40"/>
        <end position="56"/>
    </location>
</feature>
<feature type="strand" evidence="4">
    <location>
        <begin position="62"/>
        <end position="66"/>
    </location>
</feature>
<feature type="strand" evidence="6">
    <location>
        <begin position="72"/>
        <end position="74"/>
    </location>
</feature>
<feature type="strand" evidence="4">
    <location>
        <begin position="80"/>
        <end position="83"/>
    </location>
</feature>
<feature type="strand" evidence="4">
    <location>
        <begin position="89"/>
        <end position="95"/>
    </location>
</feature>
<feature type="strand" evidence="4">
    <location>
        <begin position="101"/>
        <end position="107"/>
    </location>
</feature>
<feature type="helix" evidence="4">
    <location>
        <begin position="111"/>
        <end position="114"/>
    </location>
</feature>
<feature type="strand" evidence="4">
    <location>
        <begin position="120"/>
        <end position="123"/>
    </location>
</feature>
<feature type="turn" evidence="4">
    <location>
        <begin position="124"/>
        <end position="127"/>
    </location>
</feature>
<feature type="strand" evidence="4">
    <location>
        <begin position="128"/>
        <end position="136"/>
    </location>
</feature>
<feature type="turn" evidence="4">
    <location>
        <begin position="137"/>
        <end position="140"/>
    </location>
</feature>
<feature type="strand" evidence="4">
    <location>
        <begin position="141"/>
        <end position="146"/>
    </location>
</feature>
<feature type="strand" evidence="4">
    <location>
        <begin position="151"/>
        <end position="153"/>
    </location>
</feature>
<feature type="strand" evidence="4">
    <location>
        <begin position="157"/>
        <end position="159"/>
    </location>
</feature>
<feature type="strand" evidence="4">
    <location>
        <begin position="161"/>
        <end position="163"/>
    </location>
</feature>
<feature type="helix" evidence="4">
    <location>
        <begin position="172"/>
        <end position="183"/>
    </location>
</feature>
<feature type="strand" evidence="4">
    <location>
        <begin position="187"/>
        <end position="191"/>
    </location>
</feature>
<feature type="helix" evidence="4">
    <location>
        <begin position="197"/>
        <end position="209"/>
    </location>
</feature>
<feature type="strand" evidence="4">
    <location>
        <begin position="215"/>
        <end position="218"/>
    </location>
</feature>
<feature type="helix" evidence="4">
    <location>
        <begin position="223"/>
        <end position="227"/>
    </location>
</feature>
<feature type="helix" evidence="4">
    <location>
        <begin position="229"/>
        <end position="235"/>
    </location>
</feature>
<feature type="strand" evidence="4">
    <location>
        <begin position="239"/>
        <end position="242"/>
    </location>
</feature>
<feature type="helix" evidence="4">
    <location>
        <begin position="243"/>
        <end position="249"/>
    </location>
</feature>
<feature type="helix" evidence="4">
    <location>
        <begin position="252"/>
        <end position="254"/>
    </location>
</feature>
<feature type="helix" evidence="4">
    <location>
        <begin position="255"/>
        <end position="269"/>
    </location>
</feature>
<feature type="strand" evidence="4">
    <location>
        <begin position="273"/>
        <end position="280"/>
    </location>
</feature>
<feature type="helix" evidence="4">
    <location>
        <begin position="281"/>
        <end position="283"/>
    </location>
</feature>
<feature type="strand" evidence="5">
    <location>
        <begin position="286"/>
        <end position="288"/>
    </location>
</feature>
<feature type="helix" evidence="4">
    <location>
        <begin position="291"/>
        <end position="303"/>
    </location>
</feature>
<feature type="strand" evidence="4">
    <location>
        <begin position="306"/>
        <end position="310"/>
    </location>
</feature>
<feature type="helix" evidence="4">
    <location>
        <begin position="312"/>
        <end position="315"/>
    </location>
</feature>
<feature type="helix" evidence="4">
    <location>
        <begin position="321"/>
        <end position="336"/>
    </location>
</feature>
<feature type="helix" evidence="4">
    <location>
        <begin position="340"/>
        <end position="350"/>
    </location>
</feature>
<feature type="helix" evidence="4">
    <location>
        <begin position="355"/>
        <end position="370"/>
    </location>
</feature>
<feature type="strand" evidence="4">
    <location>
        <begin position="373"/>
        <end position="378"/>
    </location>
</feature>
<feature type="strand" evidence="4">
    <location>
        <begin position="380"/>
        <end position="382"/>
    </location>
</feature>
<feature type="helix" evidence="4">
    <location>
        <begin position="383"/>
        <end position="390"/>
    </location>
</feature>
<feature type="strand" evidence="4">
    <location>
        <begin position="394"/>
        <end position="402"/>
    </location>
</feature>
<feature type="helix" evidence="4">
    <location>
        <begin position="404"/>
        <end position="411"/>
    </location>
</feature>
<feature type="strand" evidence="4">
    <location>
        <begin position="413"/>
        <end position="420"/>
    </location>
</feature>
<feature type="helix" evidence="4">
    <location>
        <begin position="427"/>
        <end position="440"/>
    </location>
</feature>
<feature type="strand" evidence="4">
    <location>
        <begin position="449"/>
        <end position="454"/>
    </location>
</feature>
<feature type="turn" evidence="4">
    <location>
        <begin position="458"/>
        <end position="460"/>
    </location>
</feature>
<feature type="strand" evidence="4">
    <location>
        <begin position="466"/>
        <end position="471"/>
    </location>
</feature>
<feature type="strand" evidence="4">
    <location>
        <begin position="476"/>
        <end position="478"/>
    </location>
</feature>
<feature type="strand" evidence="4">
    <location>
        <begin position="480"/>
        <end position="484"/>
    </location>
</feature>
<feature type="strand" evidence="4">
    <location>
        <begin position="486"/>
        <end position="493"/>
    </location>
</feature>
<feature type="helix" evidence="4">
    <location>
        <begin position="497"/>
        <end position="500"/>
    </location>
</feature>
<feature type="strand" evidence="4">
    <location>
        <begin position="501"/>
        <end position="503"/>
    </location>
</feature>
<feature type="strand" evidence="4">
    <location>
        <begin position="506"/>
        <end position="513"/>
    </location>
</feature>
<feature type="turn" evidence="4">
    <location>
        <begin position="517"/>
        <end position="519"/>
    </location>
</feature>
<feature type="helix" evidence="4">
    <location>
        <begin position="520"/>
        <end position="523"/>
    </location>
</feature>
<feature type="strand" evidence="4">
    <location>
        <begin position="526"/>
        <end position="533"/>
    </location>
</feature>
<feature type="strand" evidence="4">
    <location>
        <begin position="536"/>
        <end position="538"/>
    </location>
</feature>
<feature type="helix" evidence="4">
    <location>
        <begin position="539"/>
        <end position="546"/>
    </location>
</feature>
<feature type="strand" evidence="4">
    <location>
        <begin position="551"/>
        <end position="553"/>
    </location>
</feature>
<feature type="helix" evidence="4">
    <location>
        <begin position="558"/>
        <end position="561"/>
    </location>
</feature>
<feature type="strand" evidence="4">
    <location>
        <begin position="567"/>
        <end position="571"/>
    </location>
</feature>
<feature type="turn" evidence="4">
    <location>
        <begin position="572"/>
        <end position="575"/>
    </location>
</feature>
<feature type="strand" evidence="4">
    <location>
        <begin position="576"/>
        <end position="580"/>
    </location>
</feature>
<proteinExistence type="evidence at protein level"/>
<name>KPYK_STAAR</name>
<sequence length="585" mass="63142">MRKTKIVCTIGPASESEEMIEKLINAGMNVARLNFSHGSHEEHKGRIDTIRKVAKRLDKIVAILLDTKGPEIRTHNMKDGIIELERGNEVIVSMNEVEGTPEKFSVTYENLINDVQVGSYILLDDGLIELQVKDIDHAKKEVKCDILNSGELKNKKGVNLPGVRVSLPGITEKDAEDIRFGIKENVDFIAASFVRRPSDVLEIREILEEQKANISVFPKIENQEGIDNIEEILEVSDGLMVARGDMGVEIPPEKVPMVQKDLIRQCNKLGKPVITATQMLDSMQRNPRATRAEASDVANAIYDGTDAVMLSGETAAGLYPEEAVKTMRNIAVSAEAAQDYKKLLSDRTKLVETSLVNAIGISVAHTALNLNVKAIVAATESGSTARTISKYRPHSDIIAVTPSEETARQCSIVWGVQPVVKKGRKSTDALLNNAVATAVETGRVTNGDLIIITAGVPTGETGTTNMMKIHLVGDEIANGQGIGRGSVVGTTLVAETVKDLEGKDLSDKVIVTNSIDETFVPYVEKALGLITEENGITSPSAIVGLEKGIPTVVGVEKAVKNISNNVLVTIDAAQGKIFEGYANVL</sequence>
<evidence type="ECO:0000250" key="1"/>
<evidence type="ECO:0000250" key="2">
    <source>
        <dbReference type="UniProtKB" id="P14618"/>
    </source>
</evidence>
<evidence type="ECO:0000305" key="3"/>
<evidence type="ECO:0007829" key="4">
    <source>
        <dbReference type="PDB" id="3T05"/>
    </source>
</evidence>
<evidence type="ECO:0007829" key="5">
    <source>
        <dbReference type="PDB" id="3T07"/>
    </source>
</evidence>
<evidence type="ECO:0007829" key="6">
    <source>
        <dbReference type="PDB" id="3T0T"/>
    </source>
</evidence>
<protein>
    <recommendedName>
        <fullName>Pyruvate kinase</fullName>
        <shortName>PK</shortName>
        <ecNumber>2.7.1.40</ecNumber>
    </recommendedName>
</protein>
<comment type="catalytic activity">
    <reaction>
        <text>pyruvate + ATP = phosphoenolpyruvate + ADP + H(+)</text>
        <dbReference type="Rhea" id="RHEA:18157"/>
        <dbReference type="ChEBI" id="CHEBI:15361"/>
        <dbReference type="ChEBI" id="CHEBI:15378"/>
        <dbReference type="ChEBI" id="CHEBI:30616"/>
        <dbReference type="ChEBI" id="CHEBI:58702"/>
        <dbReference type="ChEBI" id="CHEBI:456216"/>
        <dbReference type="EC" id="2.7.1.40"/>
    </reaction>
</comment>
<comment type="cofactor">
    <cofactor evidence="1">
        <name>Mg(2+)</name>
        <dbReference type="ChEBI" id="CHEBI:18420"/>
    </cofactor>
</comment>
<comment type="cofactor">
    <cofactor evidence="1">
        <name>K(+)</name>
        <dbReference type="ChEBI" id="CHEBI:29103"/>
    </cofactor>
</comment>
<comment type="pathway">
    <text>Carbohydrate degradation; glycolysis; pyruvate from D-glyceraldehyde 3-phosphate: step 5/5.</text>
</comment>
<comment type="similarity">
    <text evidence="3">Belongs to the pyruvate kinase family.</text>
</comment>
<comment type="similarity">
    <text evidence="3">In the C-terminal section; belongs to the PEP-utilizing enzyme family.</text>
</comment>
<keyword id="KW-0002">3D-structure</keyword>
<keyword id="KW-0067">ATP-binding</keyword>
<keyword id="KW-0324">Glycolysis</keyword>
<keyword id="KW-0418">Kinase</keyword>
<keyword id="KW-0460">Magnesium</keyword>
<keyword id="KW-0479">Metal-binding</keyword>
<keyword id="KW-0547">Nucleotide-binding</keyword>
<keyword id="KW-0630">Potassium</keyword>
<keyword id="KW-0670">Pyruvate</keyword>
<keyword id="KW-0808">Transferase</keyword>
<dbReference type="EC" id="2.7.1.40"/>
<dbReference type="EMBL" id="BX571856">
    <property type="protein sequence ID" value="CAG40767.1"/>
    <property type="molecule type" value="Genomic_DNA"/>
</dbReference>
<dbReference type="RefSeq" id="WP_001232655.1">
    <property type="nucleotide sequence ID" value="NC_002952.2"/>
</dbReference>
<dbReference type="PDB" id="3T05">
    <property type="method" value="X-ray"/>
    <property type="resolution" value="3.05 A"/>
    <property type="chains" value="A/B/C/D=1-585"/>
</dbReference>
<dbReference type="PDB" id="3T07">
    <property type="method" value="X-ray"/>
    <property type="resolution" value="3.30 A"/>
    <property type="chains" value="A/B/C/D=1-585"/>
</dbReference>
<dbReference type="PDB" id="3T0T">
    <property type="method" value="X-ray"/>
    <property type="resolution" value="3.10 A"/>
    <property type="chains" value="A/B/C/D=1-585"/>
</dbReference>
<dbReference type="PDBsum" id="3T05"/>
<dbReference type="PDBsum" id="3T07"/>
<dbReference type="PDBsum" id="3T0T"/>
<dbReference type="SMR" id="Q6GG09"/>
<dbReference type="BindingDB" id="Q6GG09"/>
<dbReference type="ChEMBL" id="CHEMBL2189162"/>
<dbReference type="KEGG" id="sar:SAR1776"/>
<dbReference type="HOGENOM" id="CLU_015439_0_2_9"/>
<dbReference type="BRENDA" id="2.7.1.40">
    <property type="organism ID" value="3352"/>
</dbReference>
<dbReference type="UniPathway" id="UPA00109">
    <property type="reaction ID" value="UER00188"/>
</dbReference>
<dbReference type="EvolutionaryTrace" id="Q6GG09"/>
<dbReference type="PRO" id="PR:Q6GG09"/>
<dbReference type="Proteomes" id="UP000000596">
    <property type="component" value="Chromosome"/>
</dbReference>
<dbReference type="GO" id="GO:0005524">
    <property type="term" value="F:ATP binding"/>
    <property type="evidence" value="ECO:0007669"/>
    <property type="project" value="UniProtKB-KW"/>
</dbReference>
<dbReference type="GO" id="GO:0016301">
    <property type="term" value="F:kinase activity"/>
    <property type="evidence" value="ECO:0007669"/>
    <property type="project" value="UniProtKB-KW"/>
</dbReference>
<dbReference type="GO" id="GO:0000287">
    <property type="term" value="F:magnesium ion binding"/>
    <property type="evidence" value="ECO:0007669"/>
    <property type="project" value="InterPro"/>
</dbReference>
<dbReference type="GO" id="GO:0030955">
    <property type="term" value="F:potassium ion binding"/>
    <property type="evidence" value="ECO:0007669"/>
    <property type="project" value="InterPro"/>
</dbReference>
<dbReference type="GO" id="GO:0004743">
    <property type="term" value="F:pyruvate kinase activity"/>
    <property type="evidence" value="ECO:0007669"/>
    <property type="project" value="UniProtKB-EC"/>
</dbReference>
<dbReference type="FunFam" id="2.40.33.10:FF:000001">
    <property type="entry name" value="Pyruvate kinase"/>
    <property type="match status" value="1"/>
</dbReference>
<dbReference type="FunFam" id="3.20.20.60:FF:000001">
    <property type="entry name" value="Pyruvate kinase"/>
    <property type="match status" value="1"/>
</dbReference>
<dbReference type="FunFam" id="3.40.1380.20:FF:000017">
    <property type="entry name" value="Pyruvate kinase"/>
    <property type="match status" value="1"/>
</dbReference>
<dbReference type="Gene3D" id="3.20.20.60">
    <property type="entry name" value="Phosphoenolpyruvate-binding domains"/>
    <property type="match status" value="1"/>
</dbReference>
<dbReference type="Gene3D" id="3.50.30.10">
    <property type="entry name" value="Phosphohistidine domain"/>
    <property type="match status" value="1"/>
</dbReference>
<dbReference type="Gene3D" id="2.40.33.10">
    <property type="entry name" value="PK beta-barrel domain-like"/>
    <property type="match status" value="1"/>
</dbReference>
<dbReference type="Gene3D" id="3.40.1380.20">
    <property type="entry name" value="Pyruvate kinase, C-terminal domain"/>
    <property type="match status" value="1"/>
</dbReference>
<dbReference type="InterPro" id="IPR008279">
    <property type="entry name" value="PEP-util_enz_mobile_dom"/>
</dbReference>
<dbReference type="InterPro" id="IPR036637">
    <property type="entry name" value="Phosphohistidine_dom_sf"/>
</dbReference>
<dbReference type="InterPro" id="IPR001697">
    <property type="entry name" value="Pyr_Knase"/>
</dbReference>
<dbReference type="InterPro" id="IPR015813">
    <property type="entry name" value="Pyrv/PenolPyrv_kinase-like_dom"/>
</dbReference>
<dbReference type="InterPro" id="IPR040442">
    <property type="entry name" value="Pyrv_kinase-like_dom_sf"/>
</dbReference>
<dbReference type="InterPro" id="IPR011037">
    <property type="entry name" value="Pyrv_Knase-like_insert_dom_sf"/>
</dbReference>
<dbReference type="InterPro" id="IPR015793">
    <property type="entry name" value="Pyrv_Knase_brl"/>
</dbReference>
<dbReference type="InterPro" id="IPR015795">
    <property type="entry name" value="Pyrv_Knase_C"/>
</dbReference>
<dbReference type="InterPro" id="IPR036918">
    <property type="entry name" value="Pyrv_Knase_C_sf"/>
</dbReference>
<dbReference type="InterPro" id="IPR015806">
    <property type="entry name" value="Pyrv_Knase_insert_dom_sf"/>
</dbReference>
<dbReference type="NCBIfam" id="NF004491">
    <property type="entry name" value="PRK05826.1"/>
    <property type="match status" value="1"/>
</dbReference>
<dbReference type="NCBIfam" id="NF004978">
    <property type="entry name" value="PRK06354.1"/>
    <property type="match status" value="1"/>
</dbReference>
<dbReference type="NCBIfam" id="TIGR01064">
    <property type="entry name" value="pyruv_kin"/>
    <property type="match status" value="1"/>
</dbReference>
<dbReference type="PANTHER" id="PTHR11817">
    <property type="entry name" value="PYRUVATE KINASE"/>
    <property type="match status" value="1"/>
</dbReference>
<dbReference type="Pfam" id="PF00391">
    <property type="entry name" value="PEP-utilizers"/>
    <property type="match status" value="1"/>
</dbReference>
<dbReference type="Pfam" id="PF00224">
    <property type="entry name" value="PK"/>
    <property type="match status" value="1"/>
</dbReference>
<dbReference type="Pfam" id="PF02887">
    <property type="entry name" value="PK_C"/>
    <property type="match status" value="1"/>
</dbReference>
<dbReference type="PRINTS" id="PR01050">
    <property type="entry name" value="PYRUVTKNASE"/>
</dbReference>
<dbReference type="SUPFAM" id="SSF51621">
    <property type="entry name" value="Phosphoenolpyruvate/pyruvate domain"/>
    <property type="match status" value="1"/>
</dbReference>
<dbReference type="SUPFAM" id="SSF52009">
    <property type="entry name" value="Phosphohistidine domain"/>
    <property type="match status" value="1"/>
</dbReference>
<dbReference type="SUPFAM" id="SSF50800">
    <property type="entry name" value="PK beta-barrel domain-like"/>
    <property type="match status" value="1"/>
</dbReference>
<dbReference type="SUPFAM" id="SSF52935">
    <property type="entry name" value="PK C-terminal domain-like"/>
    <property type="match status" value="1"/>
</dbReference>
<gene>
    <name type="primary">pyk</name>
    <name type="ordered locus">SAR1776</name>
</gene>